<sequence>MASELPMFGQGAGVDRAACLPGAERCAGLRGLDLSMDALKQAQAPLRSAPTRPFLPQESPLSMLPCRLDRAADVRRSPVLAGATLIVRRLFIFVGTALLTLAGGYGMYDVVKVGGVTFLEALLLGLFLVLLAWVAFSFMSALAGFFVLLTRRQPNLPIDTTGPLPHVTSRTAMLLPTYNEDPHHVMARLRAMYESIDATGYGEQFDWFLLSDTTDPDIWISEEMAFIELRRACGGDQLYYRHRSDNTARKSGNIADWVTRFGAAYDHMIVLDADSLMEGDTIVRLVHAMERTPSCALIQTQPVIVNARTLFSRLQQFAGRVYGPLITAGNAWWHDGDGNYWGHNAIIRLKAFAAEAGLPELRGRKPFGGHILSHDFVEAALMRRAGWAIYMVPAVRGSFEEVPPSLLDFAGRDRRWCQGNLQHLAVLPTRGLHWVSRLHLLTGIGSYVTAPLWLLFLLVGLLISLQAHFIRPEYFPKGFSLFPTWPQQDPVLAAWVFAATMGLLILPKLLAYLVLISNREERTGFAGSGRVLAGVVCEAFVAALLAPCMMILQTKAVMEILAGRDAGWQVQRRGDGQLARGEVYRKLAGPTLCGLVLSVCAYSVSLPLLLWMSPVVLGLLLSIPLGIMTSLQLSAPGVFATPEINEPPAVVLRANELAAAEPTEMAGALRQLSRDPELLAEHLGSQSPASSRRFGPVDVPLATATAKVARCESLDDVLAWFDKLEMRAVLENPTLLRRILELPAGGRD</sequence>
<proteinExistence type="inferred from homology"/>
<keyword id="KW-0997">Cell inner membrane</keyword>
<keyword id="KW-1003">Cell membrane</keyword>
<keyword id="KW-0328">Glycosyltransferase</keyword>
<keyword id="KW-0472">Membrane</keyword>
<keyword id="KW-1185">Reference proteome</keyword>
<keyword id="KW-0808">Transferase</keyword>
<keyword id="KW-0812">Transmembrane</keyword>
<keyword id="KW-1133">Transmembrane helix</keyword>
<organism>
    <name type="scientific">Bradyrhizobium diazoefficiens (strain JCM 10833 / BCRC 13528 / IAM 13628 / NBRC 14792 / USDA 110)</name>
    <dbReference type="NCBI Taxonomy" id="224911"/>
    <lineage>
        <taxon>Bacteria</taxon>
        <taxon>Pseudomonadati</taxon>
        <taxon>Pseudomonadota</taxon>
        <taxon>Alphaproteobacteria</taxon>
        <taxon>Hyphomicrobiales</taxon>
        <taxon>Nitrobacteraceae</taxon>
        <taxon>Bradyrhizobium</taxon>
    </lineage>
</organism>
<accession>Q89BU5</accession>
<feature type="chain" id="PRO_0000210347" description="Glucans biosynthesis glucosyltransferase H">
    <location>
        <begin position="1"/>
        <end position="748"/>
    </location>
</feature>
<feature type="transmembrane region" description="Helical" evidence="1">
    <location>
        <begin position="85"/>
        <end position="107"/>
    </location>
</feature>
<feature type="transmembrane region" description="Helical" evidence="1">
    <location>
        <begin position="127"/>
        <end position="149"/>
    </location>
</feature>
<feature type="transmembrane region" description="Helical" evidence="1">
    <location>
        <begin position="443"/>
        <end position="465"/>
    </location>
</feature>
<feature type="transmembrane region" description="Helical" evidence="1">
    <location>
        <begin position="494"/>
        <end position="516"/>
    </location>
</feature>
<feature type="transmembrane region" description="Helical" evidence="1">
    <location>
        <begin position="529"/>
        <end position="551"/>
    </location>
</feature>
<feature type="transmembrane region" description="Helical" evidence="1">
    <location>
        <begin position="587"/>
        <end position="606"/>
    </location>
</feature>
<feature type="transmembrane region" description="Helical" evidence="1">
    <location>
        <begin position="608"/>
        <end position="630"/>
    </location>
</feature>
<comment type="function">
    <text evidence="1">Involved in the biosynthesis of osmoregulated periplasmic glucans (OPGs).</text>
</comment>
<comment type="pathway">
    <text evidence="1">Glycan metabolism; osmoregulated periplasmic glucan (OPG) biosynthesis.</text>
</comment>
<comment type="subcellular location">
    <subcellularLocation>
        <location evidence="1">Cell inner membrane</location>
        <topology evidence="1">Multi-pass membrane protein</topology>
    </subcellularLocation>
</comment>
<comment type="similarity">
    <text evidence="1">Belongs to the glycosyltransferase 2 family. OpgH subfamily.</text>
</comment>
<gene>
    <name evidence="1" type="primary">opgH</name>
    <name type="ordered locus">bll8053</name>
</gene>
<dbReference type="EC" id="2.4.1.-" evidence="1"/>
<dbReference type="EMBL" id="BA000040">
    <property type="protein sequence ID" value="BAC53318.1"/>
    <property type="molecule type" value="Genomic_DNA"/>
</dbReference>
<dbReference type="RefSeq" id="NP_774693.1">
    <property type="nucleotide sequence ID" value="NC_004463.1"/>
</dbReference>
<dbReference type="FunCoup" id="Q89BU5">
    <property type="interactions" value="34"/>
</dbReference>
<dbReference type="STRING" id="224911.AAV28_37960"/>
<dbReference type="CAZy" id="GT2">
    <property type="family name" value="Glycosyltransferase Family 2"/>
</dbReference>
<dbReference type="EnsemblBacteria" id="BAC53318">
    <property type="protein sequence ID" value="BAC53318"/>
    <property type="gene ID" value="BAC53318"/>
</dbReference>
<dbReference type="KEGG" id="bja:bll8053"/>
<dbReference type="PATRIC" id="fig|224911.5.peg.8286"/>
<dbReference type="eggNOG" id="COG2943">
    <property type="taxonomic scope" value="Bacteria"/>
</dbReference>
<dbReference type="HOGENOM" id="CLU_015730_1_0_5"/>
<dbReference type="InParanoid" id="Q89BU5"/>
<dbReference type="OrthoDB" id="9775281at2"/>
<dbReference type="PhylomeDB" id="Q89BU5"/>
<dbReference type="UniPathway" id="UPA00637"/>
<dbReference type="Proteomes" id="UP000002526">
    <property type="component" value="Chromosome"/>
</dbReference>
<dbReference type="GO" id="GO:0005886">
    <property type="term" value="C:plasma membrane"/>
    <property type="evidence" value="ECO:0000318"/>
    <property type="project" value="GO_Central"/>
</dbReference>
<dbReference type="GO" id="GO:0016758">
    <property type="term" value="F:hexosyltransferase activity"/>
    <property type="evidence" value="ECO:0000318"/>
    <property type="project" value="GO_Central"/>
</dbReference>
<dbReference type="GO" id="GO:0009250">
    <property type="term" value="P:glucan biosynthetic process"/>
    <property type="evidence" value="ECO:0007669"/>
    <property type="project" value="UniProtKB-UniRule"/>
</dbReference>
<dbReference type="CDD" id="cd04191">
    <property type="entry name" value="Glucan_BSP_MdoH"/>
    <property type="match status" value="1"/>
</dbReference>
<dbReference type="Gene3D" id="3.90.550.10">
    <property type="entry name" value="Spore Coat Polysaccharide Biosynthesis Protein SpsA, Chain A"/>
    <property type="match status" value="1"/>
</dbReference>
<dbReference type="HAMAP" id="MF_01072">
    <property type="entry name" value="MdoH_OpgH"/>
    <property type="match status" value="1"/>
</dbReference>
<dbReference type="InterPro" id="IPR023725">
    <property type="entry name" value="Glucans_biosynth_gluTrFase_H"/>
</dbReference>
<dbReference type="InterPro" id="IPR001173">
    <property type="entry name" value="Glyco_trans_2-like"/>
</dbReference>
<dbReference type="InterPro" id="IPR050321">
    <property type="entry name" value="Glycosyltr_2/OpgH_subfam"/>
</dbReference>
<dbReference type="InterPro" id="IPR029044">
    <property type="entry name" value="Nucleotide-diphossugar_trans"/>
</dbReference>
<dbReference type="NCBIfam" id="NF003956">
    <property type="entry name" value="PRK05454.1-3"/>
    <property type="match status" value="1"/>
</dbReference>
<dbReference type="NCBIfam" id="NF003958">
    <property type="entry name" value="PRK05454.2-1"/>
    <property type="match status" value="1"/>
</dbReference>
<dbReference type="NCBIfam" id="NF003962">
    <property type="entry name" value="PRK05454.2-5"/>
    <property type="match status" value="1"/>
</dbReference>
<dbReference type="PANTHER" id="PTHR43867">
    <property type="entry name" value="CELLULOSE SYNTHASE CATALYTIC SUBUNIT A [UDP-FORMING]"/>
    <property type="match status" value="1"/>
</dbReference>
<dbReference type="PANTHER" id="PTHR43867:SF5">
    <property type="entry name" value="GLUCANS BIOSYNTHESIS GLUCOSYLTRANSFERASE H"/>
    <property type="match status" value="1"/>
</dbReference>
<dbReference type="Pfam" id="PF13632">
    <property type="entry name" value="Glyco_trans_2_3"/>
    <property type="match status" value="1"/>
</dbReference>
<dbReference type="SUPFAM" id="SSF53448">
    <property type="entry name" value="Nucleotide-diphospho-sugar transferases"/>
    <property type="match status" value="1"/>
</dbReference>
<protein>
    <recommendedName>
        <fullName evidence="1">Glucans biosynthesis glucosyltransferase H</fullName>
        <ecNumber evidence="1">2.4.1.-</ecNumber>
    </recommendedName>
</protein>
<reference key="1">
    <citation type="journal article" date="2002" name="DNA Res.">
        <title>Complete genomic sequence of nitrogen-fixing symbiotic bacterium Bradyrhizobium japonicum USDA110.</title>
        <authorList>
            <person name="Kaneko T."/>
            <person name="Nakamura Y."/>
            <person name="Sato S."/>
            <person name="Minamisawa K."/>
            <person name="Uchiumi T."/>
            <person name="Sasamoto S."/>
            <person name="Watanabe A."/>
            <person name="Idesawa K."/>
            <person name="Iriguchi M."/>
            <person name="Kawashima K."/>
            <person name="Kohara M."/>
            <person name="Matsumoto M."/>
            <person name="Shimpo S."/>
            <person name="Tsuruoka H."/>
            <person name="Wada T."/>
            <person name="Yamada M."/>
            <person name="Tabata S."/>
        </authorList>
    </citation>
    <scope>NUCLEOTIDE SEQUENCE [LARGE SCALE GENOMIC DNA]</scope>
    <source>
        <strain>JCM 10833 / BCRC 13528 / IAM 13628 / NBRC 14792 / USDA 110</strain>
    </source>
</reference>
<name>OPGH_BRADU</name>
<evidence type="ECO:0000255" key="1">
    <source>
        <dbReference type="HAMAP-Rule" id="MF_01072"/>
    </source>
</evidence>